<accession>Q9AC52</accession>
<reference key="1">
    <citation type="journal article" date="2001" name="Proc. Natl. Acad. Sci. U.S.A.">
        <title>Complete genome sequence of Caulobacter crescentus.</title>
        <authorList>
            <person name="Nierman W.C."/>
            <person name="Feldblyum T.V."/>
            <person name="Laub M.T."/>
            <person name="Paulsen I.T."/>
            <person name="Nelson K.E."/>
            <person name="Eisen J.A."/>
            <person name="Heidelberg J.F."/>
            <person name="Alley M.R.K."/>
            <person name="Ohta N."/>
            <person name="Maddock J.R."/>
            <person name="Potocka I."/>
            <person name="Nelson W.C."/>
            <person name="Newton A."/>
            <person name="Stephens C."/>
            <person name="Phadke N.D."/>
            <person name="Ely B."/>
            <person name="DeBoy R.T."/>
            <person name="Dodson R.J."/>
            <person name="Durkin A.S."/>
            <person name="Gwinn M.L."/>
            <person name="Haft D.H."/>
            <person name="Kolonay J.F."/>
            <person name="Smit J."/>
            <person name="Craven M.B."/>
            <person name="Khouri H.M."/>
            <person name="Shetty J."/>
            <person name="Berry K.J."/>
            <person name="Utterback T.R."/>
            <person name="Tran K."/>
            <person name="Wolf A.M."/>
            <person name="Vamathevan J.J."/>
            <person name="Ermolaeva M.D."/>
            <person name="White O."/>
            <person name="Salzberg S.L."/>
            <person name="Venter J.C."/>
            <person name="Shapiro L."/>
            <person name="Fraser C.M."/>
        </authorList>
    </citation>
    <scope>NUCLEOTIDE SEQUENCE [LARGE SCALE GENOMIC DNA]</scope>
    <source>
        <strain>ATCC 19089 / CIP 103742 / CB 15</strain>
    </source>
</reference>
<keyword id="KW-0456">Lyase</keyword>
<keyword id="KW-0501">Molybdenum cofactor biosynthesis</keyword>
<keyword id="KW-1185">Reference proteome</keyword>
<proteinExistence type="inferred from homology"/>
<organism>
    <name type="scientific">Caulobacter vibrioides (strain ATCC 19089 / CIP 103742 / CB 15)</name>
    <name type="common">Caulobacter crescentus</name>
    <dbReference type="NCBI Taxonomy" id="190650"/>
    <lineage>
        <taxon>Bacteria</taxon>
        <taxon>Pseudomonadati</taxon>
        <taxon>Pseudomonadota</taxon>
        <taxon>Alphaproteobacteria</taxon>
        <taxon>Caulobacterales</taxon>
        <taxon>Caulobacteraceae</taxon>
        <taxon>Caulobacter</taxon>
    </lineage>
</organism>
<comment type="function">
    <text evidence="1">Catalyzes the conversion of (8S)-3',8-cyclo-7,8-dihydroguanosine 5'-triphosphate to cyclic pyranopterin monophosphate (cPMP).</text>
</comment>
<comment type="catalytic activity">
    <reaction evidence="1">
        <text>(8S)-3',8-cyclo-7,8-dihydroguanosine 5'-triphosphate = cyclic pyranopterin phosphate + diphosphate</text>
        <dbReference type="Rhea" id="RHEA:49580"/>
        <dbReference type="ChEBI" id="CHEBI:33019"/>
        <dbReference type="ChEBI" id="CHEBI:59648"/>
        <dbReference type="ChEBI" id="CHEBI:131766"/>
        <dbReference type="EC" id="4.6.1.17"/>
    </reaction>
</comment>
<comment type="pathway">
    <text evidence="1">Cofactor biosynthesis; molybdopterin biosynthesis.</text>
</comment>
<comment type="subunit">
    <text evidence="1">Homohexamer; trimer of dimers.</text>
</comment>
<comment type="similarity">
    <text evidence="1">Belongs to the MoaC family.</text>
</comment>
<comment type="sequence caution" evidence="2">
    <conflict type="erroneous initiation">
        <sequence resource="EMBL-CDS" id="AAK22002"/>
    </conflict>
</comment>
<name>MOAC_CAUVC</name>
<protein>
    <recommendedName>
        <fullName evidence="1">Cyclic pyranopterin monophosphate synthase</fullName>
        <ecNumber evidence="1">4.6.1.17</ecNumber>
    </recommendedName>
    <alternativeName>
        <fullName evidence="1">Molybdenum cofactor biosynthesis protein C</fullName>
    </alternativeName>
</protein>
<feature type="chain" id="PRO_0000097792" description="Cyclic pyranopterin monophosphate synthase">
    <location>
        <begin position="1"/>
        <end position="158"/>
    </location>
</feature>
<feature type="active site" evidence="1">
    <location>
        <position position="126"/>
    </location>
</feature>
<feature type="binding site" evidence="1">
    <location>
        <begin position="75"/>
        <end position="77"/>
    </location>
    <ligand>
        <name>substrate</name>
    </ligand>
</feature>
<feature type="binding site" evidence="1">
    <location>
        <begin position="111"/>
        <end position="112"/>
    </location>
    <ligand>
        <name>substrate</name>
    </ligand>
</feature>
<evidence type="ECO:0000255" key="1">
    <source>
        <dbReference type="HAMAP-Rule" id="MF_01224"/>
    </source>
</evidence>
<evidence type="ECO:0000305" key="2"/>
<sequence>MSKLTHIDDQGRARMVDVSEKPATAREAVAAGFVRMSAETLALAISGSGRKGDVRAVAELAGVMAAKKTSDLIPLCHPLALSKVEVAVEPADGGLSVTARVKTTGPTGVEMEALTAASVACLTIYDMLKAAEKGMVIEAVRLLEKTGGKSGDWKADQP</sequence>
<dbReference type="EC" id="4.6.1.17" evidence="1"/>
<dbReference type="EMBL" id="AE005673">
    <property type="protein sequence ID" value="AAK22002.1"/>
    <property type="status" value="ALT_INIT"/>
    <property type="molecule type" value="Genomic_DNA"/>
</dbReference>
<dbReference type="PIR" id="F87250">
    <property type="entry name" value="F87250"/>
</dbReference>
<dbReference type="RefSeq" id="NP_418834.1">
    <property type="nucleotide sequence ID" value="NC_002696.2"/>
</dbReference>
<dbReference type="RefSeq" id="WP_012639855.1">
    <property type="nucleotide sequence ID" value="NC_002696.2"/>
</dbReference>
<dbReference type="SMR" id="Q9AC52"/>
<dbReference type="STRING" id="190650.CC_0014"/>
<dbReference type="EnsemblBacteria" id="AAK22002">
    <property type="protein sequence ID" value="AAK22002"/>
    <property type="gene ID" value="CC_0014"/>
</dbReference>
<dbReference type="KEGG" id="ccr:CC_0014"/>
<dbReference type="PATRIC" id="fig|190650.5.peg.15"/>
<dbReference type="eggNOG" id="COG0315">
    <property type="taxonomic scope" value="Bacteria"/>
</dbReference>
<dbReference type="HOGENOM" id="CLU_074693_1_1_5"/>
<dbReference type="UniPathway" id="UPA00344"/>
<dbReference type="Proteomes" id="UP000001816">
    <property type="component" value="Chromosome"/>
</dbReference>
<dbReference type="GO" id="GO:0061799">
    <property type="term" value="F:cyclic pyranopterin monophosphate synthase activity"/>
    <property type="evidence" value="ECO:0007669"/>
    <property type="project" value="UniProtKB-UniRule"/>
</dbReference>
<dbReference type="GO" id="GO:0006777">
    <property type="term" value="P:Mo-molybdopterin cofactor biosynthetic process"/>
    <property type="evidence" value="ECO:0007669"/>
    <property type="project" value="UniProtKB-UniRule"/>
</dbReference>
<dbReference type="CDD" id="cd01420">
    <property type="entry name" value="MoaC_PE"/>
    <property type="match status" value="1"/>
</dbReference>
<dbReference type="Gene3D" id="3.30.70.640">
    <property type="entry name" value="Molybdopterin cofactor biosynthesis C (MoaC) domain"/>
    <property type="match status" value="1"/>
</dbReference>
<dbReference type="HAMAP" id="MF_01224_B">
    <property type="entry name" value="MoaC_B"/>
    <property type="match status" value="1"/>
</dbReference>
<dbReference type="InterPro" id="IPR023045">
    <property type="entry name" value="MoaC"/>
</dbReference>
<dbReference type="InterPro" id="IPR047594">
    <property type="entry name" value="MoaC_bact/euk"/>
</dbReference>
<dbReference type="InterPro" id="IPR036522">
    <property type="entry name" value="MoaC_sf"/>
</dbReference>
<dbReference type="InterPro" id="IPR050105">
    <property type="entry name" value="MoCo_biosynth_MoaA/MoaC"/>
</dbReference>
<dbReference type="InterPro" id="IPR002820">
    <property type="entry name" value="Mopterin_CF_biosynth-C_dom"/>
</dbReference>
<dbReference type="NCBIfam" id="TIGR00581">
    <property type="entry name" value="moaC"/>
    <property type="match status" value="1"/>
</dbReference>
<dbReference type="NCBIfam" id="NF006870">
    <property type="entry name" value="PRK09364.1"/>
    <property type="match status" value="1"/>
</dbReference>
<dbReference type="PANTHER" id="PTHR22960:SF29">
    <property type="entry name" value="CYCLIC PYRANOPTERIN MONOPHOSPHATE SYNTHASE"/>
    <property type="match status" value="1"/>
</dbReference>
<dbReference type="PANTHER" id="PTHR22960">
    <property type="entry name" value="MOLYBDOPTERIN COFACTOR SYNTHESIS PROTEIN A"/>
    <property type="match status" value="1"/>
</dbReference>
<dbReference type="Pfam" id="PF01967">
    <property type="entry name" value="MoaC"/>
    <property type="match status" value="1"/>
</dbReference>
<dbReference type="SUPFAM" id="SSF55040">
    <property type="entry name" value="Molybdenum cofactor biosynthesis protein C, MoaC"/>
    <property type="match status" value="1"/>
</dbReference>
<gene>
    <name evidence="1" type="primary">moaC</name>
    <name type="ordered locus">CC_0014</name>
</gene>